<dbReference type="SMR" id="Q10745"/>
<dbReference type="GO" id="GO:0005615">
    <property type="term" value="C:extracellular space"/>
    <property type="evidence" value="ECO:0007669"/>
    <property type="project" value="TreeGrafter"/>
</dbReference>
<dbReference type="GO" id="GO:0042742">
    <property type="term" value="P:defense response to bacterium"/>
    <property type="evidence" value="ECO:0007669"/>
    <property type="project" value="UniProtKB-KW"/>
</dbReference>
<dbReference type="GO" id="GO:0006959">
    <property type="term" value="P:humoral immune response"/>
    <property type="evidence" value="ECO:0007669"/>
    <property type="project" value="TreeGrafter"/>
</dbReference>
<dbReference type="GO" id="GO:0045087">
    <property type="term" value="P:innate immune response"/>
    <property type="evidence" value="ECO:0007669"/>
    <property type="project" value="UniProtKB-KW"/>
</dbReference>
<dbReference type="Gene3D" id="3.30.30.10">
    <property type="entry name" value="Knottin, scorpion toxin-like"/>
    <property type="match status" value="1"/>
</dbReference>
<dbReference type="InterPro" id="IPR017982">
    <property type="entry name" value="Defensin_insect"/>
</dbReference>
<dbReference type="InterPro" id="IPR001542">
    <property type="entry name" value="Defensin_invertebrate/fungal"/>
</dbReference>
<dbReference type="InterPro" id="IPR003614">
    <property type="entry name" value="Scorpion_toxin-like"/>
</dbReference>
<dbReference type="InterPro" id="IPR036574">
    <property type="entry name" value="Scorpion_toxin-like_sf"/>
</dbReference>
<dbReference type="PANTHER" id="PTHR13645">
    <property type="entry name" value="DEFENSIN"/>
    <property type="match status" value="1"/>
</dbReference>
<dbReference type="PANTHER" id="PTHR13645:SF0">
    <property type="entry name" value="DEFENSIN"/>
    <property type="match status" value="1"/>
</dbReference>
<dbReference type="Pfam" id="PF01097">
    <property type="entry name" value="Defensin_2"/>
    <property type="match status" value="1"/>
</dbReference>
<dbReference type="PRINTS" id="PR00271">
    <property type="entry name" value="DEFENSIN"/>
</dbReference>
<dbReference type="SMART" id="SM00505">
    <property type="entry name" value="Knot1"/>
    <property type="match status" value="1"/>
</dbReference>
<dbReference type="SUPFAM" id="SSF57095">
    <property type="entry name" value="Scorpion toxin-like"/>
    <property type="match status" value="1"/>
</dbReference>
<dbReference type="PROSITE" id="PS51378">
    <property type="entry name" value="INVERT_DEFENSINS"/>
    <property type="match status" value="1"/>
</dbReference>
<keyword id="KW-0044">Antibiotic</keyword>
<keyword id="KW-0929">Antimicrobial</keyword>
<keyword id="KW-0211">Defensin</keyword>
<keyword id="KW-0903">Direct protein sequencing</keyword>
<keyword id="KW-1015">Disulfide bond</keyword>
<keyword id="KW-0391">Immunity</keyword>
<keyword id="KW-0399">Innate immunity</keyword>
<keyword id="KW-0964">Secreted</keyword>
<name>DEFI_TRYDI</name>
<protein>
    <recommendedName>
        <fullName>Defensin</fullName>
    </recommendedName>
</protein>
<proteinExistence type="evidence at protein level"/>
<organism>
    <name type="scientific">Trypoxylus dichotomus</name>
    <name type="common">Japanese rhinoceros beetle</name>
    <name type="synonym">Allomyrina dichotoma</name>
    <dbReference type="NCBI Taxonomy" id="273928"/>
    <lineage>
        <taxon>Eukaryota</taxon>
        <taxon>Metazoa</taxon>
        <taxon>Ecdysozoa</taxon>
        <taxon>Arthropoda</taxon>
        <taxon>Hexapoda</taxon>
        <taxon>Insecta</taxon>
        <taxon>Pterygota</taxon>
        <taxon>Neoptera</taxon>
        <taxon>Endopterygota</taxon>
        <taxon>Coleoptera</taxon>
        <taxon>Polyphaga</taxon>
        <taxon>Scarabaeiformia</taxon>
        <taxon>Scarabaeidae</taxon>
        <taxon>Dynastinae</taxon>
        <taxon>Trypoxylus</taxon>
    </lineage>
</organism>
<accession>Q10745</accession>
<comment type="function">
    <text>Antibacterial peptide. Affects Gram-negative bacteria including methicillin-resistant Staphylococcus aureus.</text>
</comment>
<comment type="subcellular location">
    <subcellularLocation>
        <location>Secreted</location>
    </subcellularLocation>
</comment>
<comment type="induction">
    <text>By bacterial infection.</text>
</comment>
<comment type="mass spectrometry"/>
<comment type="similarity">
    <text evidence="1">Belongs to the invertebrate defensin family. Type 1 subfamily.</text>
</comment>
<sequence>VTCDLLSFEAKGFAANHSLCAAHCLAIGRRGGSCERGVCICRR</sequence>
<feature type="chain" id="PRO_0000074468" description="Defensin">
    <location>
        <begin position="1"/>
        <end position="43"/>
    </location>
</feature>
<feature type="disulfide bond" evidence="1">
    <location>
        <begin position="3"/>
        <end position="34"/>
    </location>
</feature>
<feature type="disulfide bond" evidence="1">
    <location>
        <begin position="20"/>
        <end position="39"/>
    </location>
</feature>
<feature type="disulfide bond" evidence="1">
    <location>
        <begin position="24"/>
        <end position="41"/>
    </location>
</feature>
<evidence type="ECO:0000255" key="1">
    <source>
        <dbReference type="PROSITE-ProRule" id="PRU00710"/>
    </source>
</evidence>
<evidence type="ECO:0000269" key="2">
    <source>
    </source>
</evidence>
<reference key="1">
    <citation type="journal article" date="1996" name="Biochem. Biophys. Res. Commun.">
        <title>Isolation and characterization of a new member of the insect defensin family from a beetle, Allomyrina dichotoma.</title>
        <authorList>
            <person name="Miyanoshita A."/>
            <person name="Hara S."/>
            <person name="Sugiyama M."/>
            <person name="Asaoka A."/>
            <person name="Taniai K."/>
            <person name="Yukuhiro F."/>
            <person name="Yamakawa M."/>
        </authorList>
    </citation>
    <scope>PROTEIN SEQUENCE</scope>
    <scope>MASS SPECTROMETRY</scope>
    <source>
        <tissue>Hemolymph</tissue>
    </source>
</reference>